<comment type="function">
    <text evidence="1">Involved in the catabolism of homogentisate (2,5-dihydroxyphenylacetate or 2,5-OH-PhAc), a central intermediate in the degradation of phenylalanine and tyrosine. Catalyzes the oxidative ring cleavage of the aromatic ring of homogentisate to yield maleylacetoacetate.</text>
</comment>
<comment type="catalytic activity">
    <reaction evidence="1">
        <text>homogentisate + O2 = 4-maleylacetoacetate + H(+)</text>
        <dbReference type="Rhea" id="RHEA:15449"/>
        <dbReference type="ChEBI" id="CHEBI:15378"/>
        <dbReference type="ChEBI" id="CHEBI:15379"/>
        <dbReference type="ChEBI" id="CHEBI:16169"/>
        <dbReference type="ChEBI" id="CHEBI:17105"/>
        <dbReference type="EC" id="1.13.11.5"/>
    </reaction>
</comment>
<comment type="cofactor">
    <cofactor evidence="1">
        <name>Fe cation</name>
        <dbReference type="ChEBI" id="CHEBI:24875"/>
    </cofactor>
</comment>
<comment type="pathway">
    <text evidence="1">Amino-acid degradation; L-phenylalanine degradation; acetoacetate and fumarate from L-phenylalanine: step 4/6.</text>
</comment>
<comment type="subunit">
    <text evidence="1">Hexamer; dimer of trimers.</text>
</comment>
<comment type="similarity">
    <text evidence="1">Belongs to the homogentisate dioxygenase family.</text>
</comment>
<proteinExistence type="inferred from homology"/>
<protein>
    <recommendedName>
        <fullName evidence="1">Homogentisate 1,2-dioxygenase</fullName>
        <shortName evidence="1">HGDO</shortName>
        <ecNumber evidence="1">1.13.11.5</ecNumber>
    </recommendedName>
    <alternativeName>
        <fullName evidence="1">Homogentisate oxygenase</fullName>
    </alternativeName>
    <alternativeName>
        <fullName evidence="1">Homogentisic acid oxidase</fullName>
    </alternativeName>
    <alternativeName>
        <fullName evidence="1">Homogentisicase</fullName>
    </alternativeName>
</protein>
<keyword id="KW-0223">Dioxygenase</keyword>
<keyword id="KW-0408">Iron</keyword>
<keyword id="KW-0479">Metal-binding</keyword>
<keyword id="KW-0560">Oxidoreductase</keyword>
<keyword id="KW-0585">Phenylalanine catabolism</keyword>
<keyword id="KW-0828">Tyrosine catabolism</keyword>
<reference key="1">
    <citation type="submission" date="2006-08" db="EMBL/GenBank/DDBJ databases">
        <title>Complete sequence of chromosome 1 of Burkholderia cepacia AMMD.</title>
        <authorList>
            <person name="Copeland A."/>
            <person name="Lucas S."/>
            <person name="Lapidus A."/>
            <person name="Barry K."/>
            <person name="Detter J.C."/>
            <person name="Glavina del Rio T."/>
            <person name="Hammon N."/>
            <person name="Israni S."/>
            <person name="Pitluck S."/>
            <person name="Bruce D."/>
            <person name="Chain P."/>
            <person name="Malfatti S."/>
            <person name="Shin M."/>
            <person name="Vergez L."/>
            <person name="Schmutz J."/>
            <person name="Larimer F."/>
            <person name="Land M."/>
            <person name="Hauser L."/>
            <person name="Kyrpides N."/>
            <person name="Kim E."/>
            <person name="Parke J."/>
            <person name="Coenye T."/>
            <person name="Konstantinidis K."/>
            <person name="Ramette A."/>
            <person name="Tiedje J."/>
            <person name="Richardson P."/>
        </authorList>
    </citation>
    <scope>NUCLEOTIDE SEQUENCE [LARGE SCALE GENOMIC DNA]</scope>
    <source>
        <strain>ATCC BAA-244 / DSM 16087 / CCUG 44356 / LMG 19182 / AMMD</strain>
    </source>
</reference>
<feature type="chain" id="PRO_1000019523" description="Homogentisate 1,2-dioxygenase">
    <location>
        <begin position="1"/>
        <end position="444"/>
    </location>
</feature>
<feature type="active site" description="Proton acceptor" evidence="1">
    <location>
        <position position="298"/>
    </location>
</feature>
<feature type="binding site" evidence="1">
    <location>
        <position position="341"/>
    </location>
    <ligand>
        <name>Fe cation</name>
        <dbReference type="ChEBI" id="CHEBI:24875"/>
    </ligand>
</feature>
<feature type="binding site" evidence="1">
    <location>
        <position position="347"/>
    </location>
    <ligand>
        <name>Fe cation</name>
        <dbReference type="ChEBI" id="CHEBI:24875"/>
    </ligand>
</feature>
<feature type="binding site" evidence="1">
    <location>
        <position position="356"/>
    </location>
    <ligand>
        <name>homogentisate</name>
        <dbReference type="ChEBI" id="CHEBI:16169"/>
    </ligand>
</feature>
<feature type="binding site" evidence="1">
    <location>
        <position position="377"/>
    </location>
    <ligand>
        <name>Fe cation</name>
        <dbReference type="ChEBI" id="CHEBI:24875"/>
    </ligand>
</feature>
<feature type="binding site" evidence="1">
    <location>
        <position position="377"/>
    </location>
    <ligand>
        <name>homogentisate</name>
        <dbReference type="ChEBI" id="CHEBI:16169"/>
    </ligand>
</feature>
<dbReference type="EC" id="1.13.11.5" evidence="1"/>
<dbReference type="EMBL" id="CP000440">
    <property type="protein sequence ID" value="ABI86260.1"/>
    <property type="molecule type" value="Genomic_DNA"/>
</dbReference>
<dbReference type="RefSeq" id="WP_011656087.1">
    <property type="nucleotide sequence ID" value="NC_008390.1"/>
</dbReference>
<dbReference type="SMR" id="Q0BHW3"/>
<dbReference type="GeneID" id="93083888"/>
<dbReference type="KEGG" id="bam:Bamb_0701"/>
<dbReference type="PATRIC" id="fig|339670.21.peg.894"/>
<dbReference type="eggNOG" id="COG3508">
    <property type="taxonomic scope" value="Bacteria"/>
</dbReference>
<dbReference type="UniPathway" id="UPA00139">
    <property type="reaction ID" value="UER00339"/>
</dbReference>
<dbReference type="Proteomes" id="UP000000662">
    <property type="component" value="Chromosome 1"/>
</dbReference>
<dbReference type="GO" id="GO:0005737">
    <property type="term" value="C:cytoplasm"/>
    <property type="evidence" value="ECO:0007669"/>
    <property type="project" value="TreeGrafter"/>
</dbReference>
<dbReference type="GO" id="GO:0004411">
    <property type="term" value="F:homogentisate 1,2-dioxygenase activity"/>
    <property type="evidence" value="ECO:0007669"/>
    <property type="project" value="UniProtKB-UniRule"/>
</dbReference>
<dbReference type="GO" id="GO:0005506">
    <property type="term" value="F:iron ion binding"/>
    <property type="evidence" value="ECO:0007669"/>
    <property type="project" value="UniProtKB-UniRule"/>
</dbReference>
<dbReference type="GO" id="GO:0006559">
    <property type="term" value="P:L-phenylalanine catabolic process"/>
    <property type="evidence" value="ECO:0007669"/>
    <property type="project" value="UniProtKB-UniRule"/>
</dbReference>
<dbReference type="GO" id="GO:0006572">
    <property type="term" value="P:tyrosine catabolic process"/>
    <property type="evidence" value="ECO:0007669"/>
    <property type="project" value="UniProtKB-UniRule"/>
</dbReference>
<dbReference type="CDD" id="cd07000">
    <property type="entry name" value="cupin_HGO_N"/>
    <property type="match status" value="1"/>
</dbReference>
<dbReference type="FunFam" id="2.60.120.10:FF:000034">
    <property type="entry name" value="Homogentisate 1,2-dioxygenase"/>
    <property type="match status" value="1"/>
</dbReference>
<dbReference type="Gene3D" id="2.60.120.10">
    <property type="entry name" value="Jelly Rolls"/>
    <property type="match status" value="1"/>
</dbReference>
<dbReference type="HAMAP" id="MF_00334">
    <property type="entry name" value="Homogentis_dioxygen"/>
    <property type="match status" value="1"/>
</dbReference>
<dbReference type="InterPro" id="IPR046451">
    <property type="entry name" value="HgmA_C"/>
</dbReference>
<dbReference type="InterPro" id="IPR046452">
    <property type="entry name" value="HgmA_N"/>
</dbReference>
<dbReference type="InterPro" id="IPR005708">
    <property type="entry name" value="Homogentis_dOase"/>
</dbReference>
<dbReference type="InterPro" id="IPR022950">
    <property type="entry name" value="Homogentis_dOase_bac"/>
</dbReference>
<dbReference type="InterPro" id="IPR014710">
    <property type="entry name" value="RmlC-like_jellyroll"/>
</dbReference>
<dbReference type="InterPro" id="IPR011051">
    <property type="entry name" value="RmlC_Cupin_sf"/>
</dbReference>
<dbReference type="NCBIfam" id="TIGR01015">
    <property type="entry name" value="hmgA"/>
    <property type="match status" value="1"/>
</dbReference>
<dbReference type="PANTHER" id="PTHR11056">
    <property type="entry name" value="HOMOGENTISATE 1,2-DIOXYGENASE"/>
    <property type="match status" value="1"/>
</dbReference>
<dbReference type="PANTHER" id="PTHR11056:SF0">
    <property type="entry name" value="HOMOGENTISATE 1,2-DIOXYGENASE"/>
    <property type="match status" value="1"/>
</dbReference>
<dbReference type="Pfam" id="PF04209">
    <property type="entry name" value="HgmA_C"/>
    <property type="match status" value="1"/>
</dbReference>
<dbReference type="Pfam" id="PF20510">
    <property type="entry name" value="HgmA_N"/>
    <property type="match status" value="1"/>
</dbReference>
<dbReference type="SUPFAM" id="SSF51182">
    <property type="entry name" value="RmlC-like cupins"/>
    <property type="match status" value="1"/>
</dbReference>
<organism>
    <name type="scientific">Burkholderia ambifaria (strain ATCC BAA-244 / DSM 16087 / CCUG 44356 / LMG 19182 / AMMD)</name>
    <name type="common">Burkholderia cepacia (strain AMMD)</name>
    <dbReference type="NCBI Taxonomy" id="339670"/>
    <lineage>
        <taxon>Bacteria</taxon>
        <taxon>Pseudomonadati</taxon>
        <taxon>Pseudomonadota</taxon>
        <taxon>Betaproteobacteria</taxon>
        <taxon>Burkholderiales</taxon>
        <taxon>Burkholderiaceae</taxon>
        <taxon>Burkholderia</taxon>
        <taxon>Burkholderia cepacia complex</taxon>
    </lineage>
</organism>
<sequence length="444" mass="49032">MTLDLSKPATAGYLSGFANEFATEALPGALPHGRNSPQRAPYGLYAEQLSGTAFTAPRGHNRRSWLYRIRPAAVHRPFEPFTGPQRLVSEFGDSADVPPTPPNQLRWDPLPMPVEPTDFVEGLVTMAGNGSAAAMNGCAIHLYAANRSMQDRFFYSADGELLIVPQQGRLFIATEFGRLDVEPFEIAVIPRGVRFSVALPDGDARGYICENFGALLRLPDLGPIGSNGLANPRDFLTPQAAYEDREGAFELVAKLNGRLWRADIGHSPFDVVAWHGNYAPYKYDLRLFNTIGSISFDHPDPSIFLVLQSQSDTPGVDAIDFVIFPPRWLAAEDTFRPPWFHRNVASEFMGLVHGAYDAKAEGFVPGGASLHNCMSGHGPDADTFEKASASDTTKPHKVDATMAFMFETRTLIRPTRYALDTAQLQPDYFECWQGIRKHFNPEQP</sequence>
<evidence type="ECO:0000255" key="1">
    <source>
        <dbReference type="HAMAP-Rule" id="MF_00334"/>
    </source>
</evidence>
<gene>
    <name evidence="1" type="primary">hmgA</name>
    <name type="ordered locus">Bamb_0701</name>
</gene>
<accession>Q0BHW3</accession>
<name>HGD_BURCM</name>